<gene>
    <name evidence="1" type="primary">fhs</name>
    <name type="ordered locus">PsycPRwf_2355</name>
</gene>
<organism>
    <name type="scientific">Psychrobacter sp. (strain PRwf-1)</name>
    <dbReference type="NCBI Taxonomy" id="349106"/>
    <lineage>
        <taxon>Bacteria</taxon>
        <taxon>Pseudomonadati</taxon>
        <taxon>Pseudomonadota</taxon>
        <taxon>Gammaproteobacteria</taxon>
        <taxon>Moraxellales</taxon>
        <taxon>Moraxellaceae</taxon>
        <taxon>Psychrobacter</taxon>
    </lineage>
</organism>
<accession>A5WI04</accession>
<evidence type="ECO:0000255" key="1">
    <source>
        <dbReference type="HAMAP-Rule" id="MF_01543"/>
    </source>
</evidence>
<protein>
    <recommendedName>
        <fullName evidence="1">Formate--tetrahydrofolate ligase</fullName>
        <ecNumber evidence="1">6.3.4.3</ecNumber>
    </recommendedName>
    <alternativeName>
        <fullName evidence="1">Formyltetrahydrofolate synthetase</fullName>
        <shortName evidence="1">FHS</shortName>
        <shortName evidence="1">FTHFS</shortName>
    </alternativeName>
</protein>
<feature type="chain" id="PRO_1000073556" description="Formate--tetrahydrofolate ligase">
    <location>
        <begin position="1"/>
        <end position="569"/>
    </location>
</feature>
<feature type="binding site" evidence="1">
    <location>
        <begin position="68"/>
        <end position="75"/>
    </location>
    <ligand>
        <name>ATP</name>
        <dbReference type="ChEBI" id="CHEBI:30616"/>
    </ligand>
</feature>
<proteinExistence type="inferred from homology"/>
<comment type="catalytic activity">
    <reaction evidence="1">
        <text>(6S)-5,6,7,8-tetrahydrofolate + formate + ATP = (6R)-10-formyltetrahydrofolate + ADP + phosphate</text>
        <dbReference type="Rhea" id="RHEA:20221"/>
        <dbReference type="ChEBI" id="CHEBI:15740"/>
        <dbReference type="ChEBI" id="CHEBI:30616"/>
        <dbReference type="ChEBI" id="CHEBI:43474"/>
        <dbReference type="ChEBI" id="CHEBI:57453"/>
        <dbReference type="ChEBI" id="CHEBI:195366"/>
        <dbReference type="ChEBI" id="CHEBI:456216"/>
        <dbReference type="EC" id="6.3.4.3"/>
    </reaction>
</comment>
<comment type="pathway">
    <text evidence="1">One-carbon metabolism; tetrahydrofolate interconversion.</text>
</comment>
<comment type="similarity">
    <text evidence="1">Belongs to the formate--tetrahydrofolate ligase family.</text>
</comment>
<name>FTHS_PSYWF</name>
<keyword id="KW-0067">ATP-binding</keyword>
<keyword id="KW-0436">Ligase</keyword>
<keyword id="KW-0547">Nucleotide-binding</keyword>
<keyword id="KW-0554">One-carbon metabolism</keyword>
<dbReference type="EC" id="6.3.4.3" evidence="1"/>
<dbReference type="EMBL" id="CP000713">
    <property type="protein sequence ID" value="ABQ95295.1"/>
    <property type="molecule type" value="Genomic_DNA"/>
</dbReference>
<dbReference type="SMR" id="A5WI04"/>
<dbReference type="STRING" id="349106.PsycPRwf_2355"/>
<dbReference type="KEGG" id="prw:PsycPRwf_2355"/>
<dbReference type="eggNOG" id="COG2759">
    <property type="taxonomic scope" value="Bacteria"/>
</dbReference>
<dbReference type="HOGENOM" id="CLU_003601_3_3_6"/>
<dbReference type="UniPathway" id="UPA00193"/>
<dbReference type="GO" id="GO:0005524">
    <property type="term" value="F:ATP binding"/>
    <property type="evidence" value="ECO:0007669"/>
    <property type="project" value="UniProtKB-UniRule"/>
</dbReference>
<dbReference type="GO" id="GO:0004329">
    <property type="term" value="F:formate-tetrahydrofolate ligase activity"/>
    <property type="evidence" value="ECO:0007669"/>
    <property type="project" value="UniProtKB-UniRule"/>
</dbReference>
<dbReference type="GO" id="GO:0035999">
    <property type="term" value="P:tetrahydrofolate interconversion"/>
    <property type="evidence" value="ECO:0007669"/>
    <property type="project" value="UniProtKB-UniRule"/>
</dbReference>
<dbReference type="CDD" id="cd00477">
    <property type="entry name" value="FTHFS"/>
    <property type="match status" value="1"/>
</dbReference>
<dbReference type="FunFam" id="3.30.1510.10:FF:000001">
    <property type="entry name" value="Formate--tetrahydrofolate ligase"/>
    <property type="match status" value="1"/>
</dbReference>
<dbReference type="FunFam" id="3.10.410.10:FF:000001">
    <property type="entry name" value="Putative formate--tetrahydrofolate ligase"/>
    <property type="match status" value="1"/>
</dbReference>
<dbReference type="Gene3D" id="3.30.1510.10">
    <property type="entry name" value="Domain 2, N(10)-formyltetrahydrofolate synthetase"/>
    <property type="match status" value="1"/>
</dbReference>
<dbReference type="Gene3D" id="3.10.410.10">
    <property type="entry name" value="Formyltetrahydrofolate synthetase, domain 3"/>
    <property type="match status" value="1"/>
</dbReference>
<dbReference type="Gene3D" id="3.40.50.300">
    <property type="entry name" value="P-loop containing nucleotide triphosphate hydrolases"/>
    <property type="match status" value="1"/>
</dbReference>
<dbReference type="HAMAP" id="MF_01543">
    <property type="entry name" value="FTHFS"/>
    <property type="match status" value="1"/>
</dbReference>
<dbReference type="InterPro" id="IPR000559">
    <property type="entry name" value="Formate_THF_ligase"/>
</dbReference>
<dbReference type="InterPro" id="IPR020628">
    <property type="entry name" value="Formate_THF_ligase_CS"/>
</dbReference>
<dbReference type="InterPro" id="IPR027417">
    <property type="entry name" value="P-loop_NTPase"/>
</dbReference>
<dbReference type="NCBIfam" id="NF010030">
    <property type="entry name" value="PRK13505.1"/>
    <property type="match status" value="1"/>
</dbReference>
<dbReference type="Pfam" id="PF01268">
    <property type="entry name" value="FTHFS"/>
    <property type="match status" value="1"/>
</dbReference>
<dbReference type="SUPFAM" id="SSF52540">
    <property type="entry name" value="P-loop containing nucleoside triphosphate hydrolases"/>
    <property type="match status" value="1"/>
</dbReference>
<dbReference type="PROSITE" id="PS00721">
    <property type="entry name" value="FTHFS_1"/>
    <property type="match status" value="1"/>
</dbReference>
<dbReference type="PROSITE" id="PS00722">
    <property type="entry name" value="FTHFS_2"/>
    <property type="match status" value="1"/>
</dbReference>
<sequence>MTVPSDITIAQNATLRPIVDIAKKIGLSADKIEPYGYYKAKINPNDVFDMPAKSSNSKLVLVTAINPTPAGEGKTTVTIGLADALNRVHHQDQNGKRTVVALREPSVGPVFGIKGGAAGGGYAQVLPMEDINLHFTGDLHAIGAANNLLAALIDNHIYQGNALNIDPKQVVWRRAVDMNDRQLRNTVTGLGKPADGVMREDGFDITVASEVMAIFCLATDLADLKQRLGNILVAYNQDKQPIYAKDLKAHGAMAALLKDAIKPNLVQTIEGTPAILHGGPFANIAHGCNSVIATRTAMHLADYTLTEAGFGADLGAEKFCDIKCRLAGLTPDAAVVVATIRALKYNGGAAKDALKNEDLTALEQGLPNLTKHIENLQEVFGLPVVVAINQFESDTAAEIEMVRKACKRLKVEVALTQVWEKGGAGGEDLARTLLALLETHNDQPQTFGFAYDSNKPIVNKIRTVAQRIYGANDVDISVTAAAKIKRLEALGLDKMPICIAKTQYSLSDDAKLLGRPTGFNIHVRDISVSNGAGFIVVICGPIMKMPGLPKYPSAENIDVDEKGNITGLF</sequence>
<reference key="1">
    <citation type="submission" date="2007-05" db="EMBL/GenBank/DDBJ databases">
        <title>Complete sequence of chromosome of Psychrobacter sp. PRwf-1.</title>
        <authorList>
            <consortium name="US DOE Joint Genome Institute"/>
            <person name="Copeland A."/>
            <person name="Lucas S."/>
            <person name="Lapidus A."/>
            <person name="Barry K."/>
            <person name="Detter J.C."/>
            <person name="Glavina del Rio T."/>
            <person name="Hammon N."/>
            <person name="Israni S."/>
            <person name="Dalin E."/>
            <person name="Tice H."/>
            <person name="Pitluck S."/>
            <person name="Chain P."/>
            <person name="Malfatti S."/>
            <person name="Shin M."/>
            <person name="Vergez L."/>
            <person name="Schmutz J."/>
            <person name="Larimer F."/>
            <person name="Land M."/>
            <person name="Hauser L."/>
            <person name="Kyrpides N."/>
            <person name="Kim E."/>
            <person name="Tiedje J."/>
            <person name="Richardson P."/>
        </authorList>
    </citation>
    <scope>NUCLEOTIDE SEQUENCE [LARGE SCALE GENOMIC DNA]</scope>
    <source>
        <strain>PRwf-1</strain>
    </source>
</reference>